<sequence>MSGTLLAFDFGTKSIGVAVGQRITGTARPLPAIKAQDGTPDWNIIERLLKEWQPDEIIVGLPLNMDGTEQPLTARARKFANRIHGRFGVDVKLHDERLSTVEARSGLFEQGGYRALNKGKVDSASAVIILESYFEQGY</sequence>
<proteinExistence type="inferred from homology"/>
<reference key="1">
    <citation type="journal article" date="2005" name="Nucleic Acids Res.">
        <title>Genome dynamics and diversity of Shigella species, the etiologic agents of bacillary dysentery.</title>
        <authorList>
            <person name="Yang F."/>
            <person name="Yang J."/>
            <person name="Zhang X."/>
            <person name="Chen L."/>
            <person name="Jiang Y."/>
            <person name="Yan Y."/>
            <person name="Tang X."/>
            <person name="Wang J."/>
            <person name="Xiong Z."/>
            <person name="Dong J."/>
            <person name="Xue Y."/>
            <person name="Zhu Y."/>
            <person name="Xu X."/>
            <person name="Sun L."/>
            <person name="Chen S."/>
            <person name="Nie H."/>
            <person name="Peng J."/>
            <person name="Xu J."/>
            <person name="Wang Y."/>
            <person name="Yuan Z."/>
            <person name="Wen Y."/>
            <person name="Yao Z."/>
            <person name="Shen Y."/>
            <person name="Qiang B."/>
            <person name="Hou Y."/>
            <person name="Yu J."/>
            <person name="Jin Q."/>
        </authorList>
    </citation>
    <scope>NUCLEOTIDE SEQUENCE [LARGE SCALE GENOMIC DNA]</scope>
    <source>
        <strain>Sd197</strain>
    </source>
</reference>
<organism>
    <name type="scientific">Shigella dysenteriae serotype 1 (strain Sd197)</name>
    <dbReference type="NCBI Taxonomy" id="300267"/>
    <lineage>
        <taxon>Bacteria</taxon>
        <taxon>Pseudomonadati</taxon>
        <taxon>Pseudomonadota</taxon>
        <taxon>Gammaproteobacteria</taxon>
        <taxon>Enterobacterales</taxon>
        <taxon>Enterobacteriaceae</taxon>
        <taxon>Shigella</taxon>
    </lineage>
</organism>
<accession>Q32C18</accession>
<gene>
    <name evidence="1" type="primary">yqgF</name>
    <name type="ordered locus">SDY_3123</name>
</gene>
<keyword id="KW-0963">Cytoplasm</keyword>
<keyword id="KW-0378">Hydrolase</keyword>
<keyword id="KW-0540">Nuclease</keyword>
<keyword id="KW-1185">Reference proteome</keyword>
<keyword id="KW-0690">Ribosome biogenesis</keyword>
<protein>
    <recommendedName>
        <fullName evidence="1">Putative pre-16S rRNA nuclease</fullName>
        <ecNumber evidence="1">3.1.-.-</ecNumber>
    </recommendedName>
</protein>
<dbReference type="EC" id="3.1.-.-" evidence="1"/>
<dbReference type="EMBL" id="CP000034">
    <property type="protein sequence ID" value="ABB63137.1"/>
    <property type="molecule type" value="Genomic_DNA"/>
</dbReference>
<dbReference type="RefSeq" id="YP_404628.1">
    <property type="nucleotide sequence ID" value="NC_007606.1"/>
</dbReference>
<dbReference type="SMR" id="Q32C18"/>
<dbReference type="STRING" id="300267.SDY_3123"/>
<dbReference type="EnsemblBacteria" id="ABB63137">
    <property type="protein sequence ID" value="ABB63137"/>
    <property type="gene ID" value="SDY_3123"/>
</dbReference>
<dbReference type="KEGG" id="sdy:SDY_3123"/>
<dbReference type="PATRIC" id="fig|300267.13.peg.3733"/>
<dbReference type="HOGENOM" id="CLU_098240_3_0_6"/>
<dbReference type="Proteomes" id="UP000002716">
    <property type="component" value="Chromosome"/>
</dbReference>
<dbReference type="GO" id="GO:0005829">
    <property type="term" value="C:cytosol"/>
    <property type="evidence" value="ECO:0007669"/>
    <property type="project" value="TreeGrafter"/>
</dbReference>
<dbReference type="GO" id="GO:0004518">
    <property type="term" value="F:nuclease activity"/>
    <property type="evidence" value="ECO:0007669"/>
    <property type="project" value="UniProtKB-KW"/>
</dbReference>
<dbReference type="GO" id="GO:0000967">
    <property type="term" value="P:rRNA 5'-end processing"/>
    <property type="evidence" value="ECO:0007669"/>
    <property type="project" value="UniProtKB-UniRule"/>
</dbReference>
<dbReference type="CDD" id="cd16964">
    <property type="entry name" value="YqgF"/>
    <property type="match status" value="1"/>
</dbReference>
<dbReference type="FunFam" id="3.30.420.140:FF:000002">
    <property type="entry name" value="Putative pre-16S rRNA nuclease"/>
    <property type="match status" value="1"/>
</dbReference>
<dbReference type="Gene3D" id="3.30.420.140">
    <property type="entry name" value="YqgF/RNase H-like domain"/>
    <property type="match status" value="1"/>
</dbReference>
<dbReference type="HAMAP" id="MF_00651">
    <property type="entry name" value="Nuclease_YqgF"/>
    <property type="match status" value="1"/>
</dbReference>
<dbReference type="InterPro" id="IPR012337">
    <property type="entry name" value="RNaseH-like_sf"/>
</dbReference>
<dbReference type="InterPro" id="IPR005227">
    <property type="entry name" value="YqgF"/>
</dbReference>
<dbReference type="InterPro" id="IPR006641">
    <property type="entry name" value="YqgF/RNaseH-like_dom"/>
</dbReference>
<dbReference type="InterPro" id="IPR037027">
    <property type="entry name" value="YqgF/RNaseH-like_dom_sf"/>
</dbReference>
<dbReference type="NCBIfam" id="TIGR00250">
    <property type="entry name" value="RNAse_H_YqgF"/>
    <property type="match status" value="1"/>
</dbReference>
<dbReference type="PANTHER" id="PTHR33317">
    <property type="entry name" value="POLYNUCLEOTIDYL TRANSFERASE, RIBONUCLEASE H-LIKE SUPERFAMILY PROTEIN"/>
    <property type="match status" value="1"/>
</dbReference>
<dbReference type="PANTHER" id="PTHR33317:SF4">
    <property type="entry name" value="POLYNUCLEOTIDYL TRANSFERASE, RIBONUCLEASE H-LIKE SUPERFAMILY PROTEIN"/>
    <property type="match status" value="1"/>
</dbReference>
<dbReference type="Pfam" id="PF03652">
    <property type="entry name" value="RuvX"/>
    <property type="match status" value="1"/>
</dbReference>
<dbReference type="SMART" id="SM00732">
    <property type="entry name" value="YqgFc"/>
    <property type="match status" value="1"/>
</dbReference>
<dbReference type="SUPFAM" id="SSF53098">
    <property type="entry name" value="Ribonuclease H-like"/>
    <property type="match status" value="1"/>
</dbReference>
<comment type="function">
    <text evidence="1">Could be a nuclease involved in processing of the 5'-end of pre-16S rRNA.</text>
</comment>
<comment type="subcellular location">
    <subcellularLocation>
        <location evidence="1">Cytoplasm</location>
    </subcellularLocation>
</comment>
<comment type="similarity">
    <text evidence="1">Belongs to the YqgF nuclease family.</text>
</comment>
<evidence type="ECO:0000255" key="1">
    <source>
        <dbReference type="HAMAP-Rule" id="MF_00651"/>
    </source>
</evidence>
<feature type="chain" id="PRO_0000257589" description="Putative pre-16S rRNA nuclease">
    <location>
        <begin position="1"/>
        <end position="138"/>
    </location>
</feature>
<name>YQGF_SHIDS</name>